<evidence type="ECO:0000256" key="1">
    <source>
        <dbReference type="SAM" id="MobiDB-lite"/>
    </source>
</evidence>
<evidence type="ECO:0000269" key="2">
    <source>
    </source>
</evidence>
<evidence type="ECO:0000269" key="3">
    <source>
    </source>
</evidence>
<evidence type="ECO:0000269" key="4">
    <source>
    </source>
</evidence>
<evidence type="ECO:0000269" key="5">
    <source>
    </source>
</evidence>
<evidence type="ECO:0000269" key="6">
    <source>
    </source>
</evidence>
<evidence type="ECO:0000303" key="7">
    <source>
    </source>
</evidence>
<evidence type="ECO:0000305" key="8"/>
<evidence type="ECO:0000305" key="9">
    <source>
    </source>
</evidence>
<evidence type="ECO:0007744" key="10">
    <source>
        <dbReference type="PDB" id="2KPY"/>
    </source>
</evidence>
<evidence type="ECO:0007829" key="11">
    <source>
        <dbReference type="PDB" id="2KPY"/>
    </source>
</evidence>
<proteinExistence type="evidence at protein level"/>
<feature type="signal peptide" evidence="2">
    <location>
        <begin position="1"/>
        <end position="24"/>
    </location>
</feature>
<feature type="chain" id="PRO_0000007033" description="Major pollen allergen Art v 1">
    <location>
        <begin position="25"/>
        <end position="132"/>
    </location>
</feature>
<feature type="region of interest" description="Defensin-like domain" evidence="8">
    <location>
        <begin position="28"/>
        <end position="77"/>
    </location>
</feature>
<feature type="region of interest" description="Epitope recognized by IgE antibodies of mugwort pollen-sensitized patients" evidence="4">
    <location>
        <begin position="64"/>
        <end position="70"/>
    </location>
</feature>
<feature type="region of interest" description="Epitope recognized by IgE antibodies of mugwort pollen-sensitized patients" evidence="4">
    <location>
        <begin position="79"/>
        <end position="87"/>
    </location>
</feature>
<feature type="region of interest" description="Disordered" evidence="1">
    <location>
        <begin position="81"/>
        <end position="132"/>
    </location>
</feature>
<feature type="compositionally biased region" description="Pro residues" evidence="1">
    <location>
        <begin position="83"/>
        <end position="114"/>
    </location>
</feature>
<feature type="compositionally biased region" description="Low complexity" evidence="1">
    <location>
        <begin position="115"/>
        <end position="124"/>
    </location>
</feature>
<feature type="disulfide bond" evidence="4 10">
    <location>
        <begin position="30"/>
        <end position="77"/>
    </location>
</feature>
<feature type="disulfide bond" evidence="4 10">
    <location>
        <begin position="41"/>
        <end position="61"/>
    </location>
</feature>
<feature type="disulfide bond" evidence="4 10">
    <location>
        <begin position="46"/>
        <end position="71"/>
    </location>
</feature>
<feature type="disulfide bond" evidence="4 10">
    <location>
        <begin position="50"/>
        <end position="73"/>
    </location>
</feature>
<feature type="mutagenesis site" description="No effect on IgE reactivity." evidence="4">
    <original>C</original>
    <variation>S</variation>
    <location>
        <position position="30"/>
    </location>
</feature>
<feature type="mutagenesis site" description="Reduces IgE reactivity 4-fold." evidence="4">
    <original>C</original>
    <variation>S</variation>
    <location>
        <position position="41"/>
    </location>
</feature>
<feature type="mutagenesis site" description="Loss of IgE reactivity." evidence="4">
    <original>C</original>
    <variation>S</variation>
    <location>
        <position position="46"/>
    </location>
</feature>
<feature type="mutagenesis site" description="Loss of IgE reactivity." evidence="4">
    <original>C</original>
    <variation>S</variation>
    <location>
        <position position="50"/>
    </location>
</feature>
<feature type="mutagenesis site" description="Loss of IgE reactivity." evidence="4">
    <original>C</original>
    <variation>S</variation>
    <location>
        <position position="61"/>
    </location>
</feature>
<feature type="mutagenesis site" description="Loss of IgE reactivity." evidence="4">
    <original>C</original>
    <variation>S</variation>
    <location>
        <position position="71"/>
    </location>
</feature>
<feature type="mutagenesis site" description="Loss of IgE reactivity." evidence="4">
    <original>C</original>
    <variation>S</variation>
    <location>
        <position position="73"/>
    </location>
</feature>
<feature type="mutagenesis site" description="No effect on IgE reactivity." evidence="4">
    <original>C</original>
    <variation>S</variation>
    <location>
        <position position="77"/>
    </location>
</feature>
<feature type="strand" evidence="11">
    <location>
        <begin position="28"/>
        <end position="36"/>
    </location>
</feature>
<feature type="helix" evidence="11">
    <location>
        <begin position="44"/>
        <end position="53"/>
    </location>
</feature>
<feature type="strand" evidence="11">
    <location>
        <begin position="57"/>
        <end position="64"/>
    </location>
</feature>
<feature type="turn" evidence="11">
    <location>
        <begin position="65"/>
        <end position="67"/>
    </location>
</feature>
<feature type="strand" evidence="11">
    <location>
        <begin position="68"/>
        <end position="79"/>
    </location>
</feature>
<feature type="strand" evidence="11">
    <location>
        <begin position="89"/>
        <end position="91"/>
    </location>
</feature>
<organism>
    <name type="scientific">Artemisia vulgaris</name>
    <name type="common">Mugwort</name>
    <dbReference type="NCBI Taxonomy" id="4220"/>
    <lineage>
        <taxon>Eukaryota</taxon>
        <taxon>Viridiplantae</taxon>
        <taxon>Streptophyta</taxon>
        <taxon>Embryophyta</taxon>
        <taxon>Tracheophyta</taxon>
        <taxon>Spermatophyta</taxon>
        <taxon>Magnoliopsida</taxon>
        <taxon>eudicotyledons</taxon>
        <taxon>Gunneridae</taxon>
        <taxon>Pentapetalae</taxon>
        <taxon>asterids</taxon>
        <taxon>campanulids</taxon>
        <taxon>Asterales</taxon>
        <taxon>Asteraceae</taxon>
        <taxon>Asteroideae</taxon>
        <taxon>Anthemideae</taxon>
        <taxon>Artemisiinae</taxon>
        <taxon>Artemisia</taxon>
    </lineage>
</organism>
<sequence length="132" mass="13404">MAKCSYVFCAVLLIFIVAIGEMEAAGSKLCEKTSKTYSGKCDNKKCDKKCIEWEKAQHGACHKREAGKESCFCYFDCSKSPPGATPAPPGAAPPPAAGGSPSPPADGGSPPPPADGGSPPVDGGSPPPPSTH</sequence>
<name>ALL1_ARTVU</name>
<dbReference type="EMBL" id="AF493943">
    <property type="protein sequence ID" value="AAO24900.1"/>
    <property type="molecule type" value="mRNA"/>
</dbReference>
<dbReference type="PDB" id="2KPY">
    <property type="method" value="NMR"/>
    <property type="chains" value="A=25-132"/>
</dbReference>
<dbReference type="PDBsum" id="2KPY"/>
<dbReference type="BMRB" id="Q84ZX5"/>
<dbReference type="SMR" id="Q84ZX5"/>
<dbReference type="Allergome" id="3102">
    <property type="allergen name" value="Art v 1.0101"/>
</dbReference>
<dbReference type="Allergome" id="753">
    <property type="allergen name" value="Art v 1"/>
</dbReference>
<dbReference type="EvolutionaryTrace" id="Q84ZX5"/>
<dbReference type="GO" id="GO:0005576">
    <property type="term" value="C:extracellular region"/>
    <property type="evidence" value="ECO:0007669"/>
    <property type="project" value="UniProtKB-SubCell"/>
</dbReference>
<dbReference type="GO" id="GO:0140677">
    <property type="term" value="F:molecular function activator activity"/>
    <property type="evidence" value="ECO:0000269"/>
    <property type="project" value="DisProt"/>
</dbReference>
<dbReference type="GO" id="GO:0006952">
    <property type="term" value="P:defense response"/>
    <property type="evidence" value="ECO:0007669"/>
    <property type="project" value="InterPro"/>
</dbReference>
<dbReference type="DisProt" id="DP00807"/>
<dbReference type="Gene3D" id="3.30.30.10">
    <property type="entry name" value="Knottin, scorpion toxin-like"/>
    <property type="match status" value="1"/>
</dbReference>
<dbReference type="InterPro" id="IPR003614">
    <property type="entry name" value="Scorpion_toxin-like"/>
</dbReference>
<dbReference type="InterPro" id="IPR036574">
    <property type="entry name" value="Scorpion_toxin-like_sf"/>
</dbReference>
<dbReference type="PANTHER" id="PTHR33147">
    <property type="entry name" value="DEFENSIN-LIKE PROTEIN 1"/>
    <property type="match status" value="1"/>
</dbReference>
<dbReference type="PANTHER" id="PTHR33147:SF147">
    <property type="entry name" value="KNOTTIN, SCORPION TOXIN"/>
    <property type="match status" value="1"/>
</dbReference>
<dbReference type="Pfam" id="PF00304">
    <property type="entry name" value="Gamma-thionin"/>
    <property type="match status" value="1"/>
</dbReference>
<dbReference type="SMART" id="SM00505">
    <property type="entry name" value="Knot1"/>
    <property type="match status" value="1"/>
</dbReference>
<dbReference type="SUPFAM" id="SSF57095">
    <property type="entry name" value="Scorpion toxin-like"/>
    <property type="match status" value="1"/>
</dbReference>
<comment type="subcellular location">
    <subcellularLocation>
        <location evidence="9">Secreted</location>
    </subcellularLocation>
</comment>
<comment type="domain">
    <text evidence="9">Contains several extensin-like repeats in the C-terminal section.</text>
</comment>
<comment type="PTM">
    <text evidence="9">The mature protein extracted from the plant exhibits an average rate of 76% of hydroxyprolines.</text>
</comment>
<comment type="PTM">
    <text evidence="2">O-glycosylated. O-linkage of 3 galactoses plus 9-16 or 21-23 arabinose residues attached on one or two hydroxyprolines.</text>
</comment>
<comment type="allergen">
    <text evidence="2 3 4 5 6">Causes an allergic reaction in human. Binds to IgE of mugwort pollen-sensitized patients (PubMed:12475905, PubMed:14510717, PubMed:20696401, PubMed:29220102, PubMed:30155917). Binds to IgE in 78% of the 113 Chinese patients tested (PubMed:29220102). Binds to IgE in 81% of the 240 Chinese patients tested. The patients from Southwestern China have significantly lower frequency of sensitization and lower IgE levels against this protein than the patients from Northern China. Patients allergic to multiple Artemisia allergens, including Art v 1, Art v 3 and Art an 7, have a higher risk of developing allergic asthma (PubMed:30155917). Post-translational modifications might be important in the formation of epitopes recognized by IgE antibodies from allergic patients (PubMed:12475905).</text>
</comment>
<comment type="biotechnology">
    <text evidence="2 3">Post-translational modifications do not seem to influence T-cell recognition. Thus, recombinant non-glycosylated Art v 1 could be a starting template for engineering hypoallergenic vaccines for weed-pollen therapy (PubMed:12475905). Optimization of codon usage is required for effective genetic immunization against Art v 1 and should be considered in the development of vaccines for the treatment of allergy (PubMed:14510717).</text>
</comment>
<comment type="similarity">
    <text evidence="8">In the N-terminal section; belongs to the DEFL family.</text>
</comment>
<accession>Q84ZX5</accession>
<protein>
    <recommendedName>
        <fullName evidence="7">Major pollen allergen Art v 1</fullName>
    </recommendedName>
    <alternativeName>
        <fullName evidence="8">Defensin-like protein 1</fullName>
    </alternativeName>
    <allergenName evidence="7">Art v 1</allergenName>
</protein>
<keyword id="KW-0002">3D-structure</keyword>
<keyword id="KW-0020">Allergen</keyword>
<keyword id="KW-0903">Direct protein sequencing</keyword>
<keyword id="KW-1015">Disulfide bond</keyword>
<keyword id="KW-0325">Glycoprotein</keyword>
<keyword id="KW-0964">Secreted</keyword>
<keyword id="KW-0732">Signal</keyword>
<reference key="1">
    <citation type="journal article" date="2003" name="FASEB J.">
        <title>Art v 1, the major allergen of mugwort pollen, is a modular glycoprotein with a defensin-like and a hydroxyproline-rich domain.</title>
        <authorList>
            <person name="Himly M."/>
            <person name="Jahn-Schmid B."/>
            <person name="Dedic A."/>
            <person name="Kelemen P."/>
            <person name="Wopfner N."/>
            <person name="Altmann F."/>
            <person name="van Ree R."/>
            <person name="Briza P."/>
            <person name="Richter K."/>
            <person name="Ebner C."/>
            <person name="Ferreira F."/>
        </authorList>
    </citation>
    <scope>NUCLEOTIDE SEQUENCE [MRNA]</scope>
    <scope>PROTEIN SEQUENCE OF 25-39</scope>
    <scope>IDENTIFICATION BY MASS SPECTROMETRY</scope>
    <scope>GLYCOSYLATION</scope>
    <scope>ALLERGEN</scope>
    <scope>BIOTECHNOLOGY</scope>
    <source>
        <tissue>Pollen</tissue>
    </source>
</reference>
<reference key="2">
    <citation type="journal article" date="2003" name="Allergy">
        <title>Optimization of codon usage is required for effective genetic immunization against Art v 1, the major allergen of mugwort pollen.</title>
        <authorList>
            <person name="Bauer R."/>
            <person name="Himly M."/>
            <person name="Dedic A."/>
            <person name="Ferreira F."/>
            <person name="Thalhamer J."/>
            <person name="Hartl A."/>
        </authorList>
    </citation>
    <scope>NUCLEOTIDE SEQUENCE [MRNA]</scope>
    <scope>ALLERGEN</scope>
    <scope>BIOTECHNOLOGY</scope>
    <source>
        <tissue>Pollen</tissue>
    </source>
</reference>
<reference key="3">
    <citation type="journal article" date="2010" name="Structure">
        <title>Mapping the interactions between a major pollen allergen and human IgE antibodies.</title>
        <authorList>
            <person name="Razzera G."/>
            <person name="Gadermaier G."/>
            <person name="de Paula V."/>
            <person name="Almeida M.S."/>
            <person name="Egger M."/>
            <person name="Jahn-Schmid B."/>
            <person name="Almeida F.C."/>
            <person name="Ferreira F."/>
            <person name="Valente A.P."/>
        </authorList>
    </citation>
    <scope>STRUCTURE BY NMR OF 25-132</scope>
    <scope>ALLERGEN</scope>
    <scope>EPITOPE MAPPING</scope>
    <scope>DISULFIDE BONDS</scope>
    <scope>MUTAGENESIS OF CYS-30; CYS-41; CYS-46; CYS-50; CYS-61; CYS-71; CYS-73 AND CYS-77</scope>
</reference>
<reference key="4">
    <citation type="journal article" date="2018" name="Allergy">
        <title>Identification of a 62-kDa major allergen from Artemisia pollen as a putative galactose oxidase.</title>
        <authorList>
            <person name="Fu W."/>
            <person name="Gao Z."/>
            <person name="Gao L."/>
            <person name="Jin J."/>
            <person name="Liu M."/>
            <person name="Sun Y."/>
            <person name="Wu S."/>
            <person name="Wu L."/>
            <person name="Ma H."/>
            <person name="Dong Y."/>
            <person name="Wang X."/>
            <person name="Gao B."/>
            <person name="Wang H."/>
            <person name="Akkerdaas J.H."/>
            <person name="Versteeg S.A."/>
            <person name="van Ree R."/>
        </authorList>
    </citation>
    <scope>ALLERGEN</scope>
</reference>
<reference key="5">
    <citation type="journal article" date="2019" name="Allergy">
        <title>Artemisia pollen allergy in China: Component-resolved diagnosis reveals allergic asthma patients have significant multiple allergen sensitization.</title>
        <authorList>
            <person name="Gao Z."/>
            <person name="Fu W.Y."/>
            <person name="Sun Y."/>
            <person name="Gao B."/>
            <person name="Wang H.Y."/>
            <person name="Liu M."/>
            <person name="Luo F.M."/>
            <person name="Zhou X."/>
            <person name="Jin J."/>
            <person name="Zhao L."/>
            <person name="Wu S."/>
            <person name="Liu Y."/>
            <person name="Wu L."/>
            <person name="Wang X."/>
            <person name="Tang N.B."/>
            <person name="Guo B.H."/>
            <person name="Feng Y."/>
            <person name="Zhou J.Y."/>
            <person name="Gadermaier G."/>
            <person name="Ferreira F."/>
            <person name="Versteeg S.A."/>
            <person name="van Ree R."/>
        </authorList>
    </citation>
    <scope>ALLERGEN</scope>
</reference>